<organism>
    <name type="scientific">Penicillium rubens (strain ATCC 28089 / DSM 1075 / NRRL 1951 / Wisconsin 54-1255)</name>
    <name type="common">Penicillium chrysogenum</name>
    <dbReference type="NCBI Taxonomy" id="500485"/>
    <lineage>
        <taxon>Eukaryota</taxon>
        <taxon>Fungi</taxon>
        <taxon>Dikarya</taxon>
        <taxon>Ascomycota</taxon>
        <taxon>Pezizomycotina</taxon>
        <taxon>Eurotiomycetes</taxon>
        <taxon>Eurotiomycetidae</taxon>
        <taxon>Eurotiales</taxon>
        <taxon>Aspergillaceae</taxon>
        <taxon>Penicillium</taxon>
        <taxon>Penicillium chrysogenum species complex</taxon>
    </lineage>
</organism>
<feature type="chain" id="PRO_0000409423" description="Tethering factor for nuclear proteasome sts1">
    <location>
        <begin position="1"/>
        <end position="311"/>
    </location>
</feature>
<feature type="region of interest" description="Disordered" evidence="2">
    <location>
        <begin position="1"/>
        <end position="83"/>
    </location>
</feature>
<feature type="compositionally biased region" description="Low complexity" evidence="2">
    <location>
        <begin position="18"/>
        <end position="34"/>
    </location>
</feature>
<keyword id="KW-0963">Cytoplasm</keyword>
<keyword id="KW-0539">Nucleus</keyword>
<keyword id="KW-0653">Protein transport</keyword>
<keyword id="KW-1185">Reference proteome</keyword>
<keyword id="KW-0813">Transport</keyword>
<evidence type="ECO:0000250" key="1"/>
<evidence type="ECO:0000256" key="2">
    <source>
        <dbReference type="SAM" id="MobiDB-lite"/>
    </source>
</evidence>
<evidence type="ECO:0000305" key="3"/>
<reference key="1">
    <citation type="journal article" date="2008" name="Nat. Biotechnol.">
        <title>Genome sequencing and analysis of the filamentous fungus Penicillium chrysogenum.</title>
        <authorList>
            <person name="van den Berg M.A."/>
            <person name="Albang R."/>
            <person name="Albermann K."/>
            <person name="Badger J.H."/>
            <person name="Daran J.-M."/>
            <person name="Driessen A.J.M."/>
            <person name="Garcia-Estrada C."/>
            <person name="Fedorova N.D."/>
            <person name="Harris D.M."/>
            <person name="Heijne W.H.M."/>
            <person name="Joardar V.S."/>
            <person name="Kiel J.A.K.W."/>
            <person name="Kovalchuk A."/>
            <person name="Martin J.F."/>
            <person name="Nierman W.C."/>
            <person name="Nijland J.G."/>
            <person name="Pronk J.T."/>
            <person name="Roubos J.A."/>
            <person name="van der Klei I.J."/>
            <person name="van Peij N.N.M.E."/>
            <person name="Veenhuis M."/>
            <person name="von Doehren H."/>
            <person name="Wagner C."/>
            <person name="Wortman J.R."/>
            <person name="Bovenberg R.A.L."/>
        </authorList>
    </citation>
    <scope>NUCLEOTIDE SEQUENCE [LARGE SCALE GENOMIC DNA]</scope>
    <source>
        <strain>ATCC 28089 / DSM 1075 / NRRL 1951 / Wisconsin 54-1255</strain>
    </source>
</reference>
<protein>
    <recommendedName>
        <fullName>Tethering factor for nuclear proteasome sts1</fullName>
    </recommendedName>
</protein>
<comment type="function">
    <text evidence="1">Involved in ubiquitin-mediated protein degradation. Regulatory factor in the ubiquitin/proteasome pathway that controls the turnover of proteasome substrates. Targets proteasomes to the nucleus and facilitates the degradation of nuclear proteins (By similarity).</text>
</comment>
<comment type="subunit">
    <text evidence="1">Binds the proteasome.</text>
</comment>
<comment type="subcellular location">
    <subcellularLocation>
        <location evidence="1">Cytoplasm</location>
    </subcellularLocation>
    <subcellularLocation>
        <location evidence="1">Nucleus</location>
    </subcellularLocation>
</comment>
<comment type="similarity">
    <text evidence="3">Belongs to the cut8/STS1 family.</text>
</comment>
<accession>B6HUK8</accession>
<gene>
    <name type="primary">sts1</name>
    <name type="ORF">Pc22g18360</name>
</gene>
<dbReference type="EMBL" id="AM920437">
    <property type="protein sequence ID" value="CAP99124.1"/>
    <property type="molecule type" value="Genomic_DNA"/>
</dbReference>
<dbReference type="RefSeq" id="XP_002565741.1">
    <property type="nucleotide sequence ID" value="XM_002565695.1"/>
</dbReference>
<dbReference type="SMR" id="B6HUK8"/>
<dbReference type="STRING" id="500485.B6HUK8"/>
<dbReference type="GeneID" id="8313496"/>
<dbReference type="KEGG" id="pcs:N7525_004514"/>
<dbReference type="VEuPathDB" id="FungiDB:PCH_Pc22g18360"/>
<dbReference type="eggNOG" id="ENOG502RNK4">
    <property type="taxonomic scope" value="Eukaryota"/>
</dbReference>
<dbReference type="HOGENOM" id="CLU_033658_0_0_1"/>
<dbReference type="OMA" id="DYTPHFL"/>
<dbReference type="OrthoDB" id="10061064at2759"/>
<dbReference type="BioCyc" id="PCHR:PC22G18360-MONOMER"/>
<dbReference type="Proteomes" id="UP000000724">
    <property type="component" value="Contig Pc00c22"/>
</dbReference>
<dbReference type="GO" id="GO:0005737">
    <property type="term" value="C:cytoplasm"/>
    <property type="evidence" value="ECO:0007669"/>
    <property type="project" value="UniProtKB-SubCell"/>
</dbReference>
<dbReference type="GO" id="GO:0031965">
    <property type="term" value="C:nuclear membrane"/>
    <property type="evidence" value="ECO:0007669"/>
    <property type="project" value="TreeGrafter"/>
</dbReference>
<dbReference type="GO" id="GO:0070628">
    <property type="term" value="F:proteasome binding"/>
    <property type="evidence" value="ECO:0007669"/>
    <property type="project" value="TreeGrafter"/>
</dbReference>
<dbReference type="GO" id="GO:0071630">
    <property type="term" value="P:nuclear protein quality control by the ubiquitin-proteasome system"/>
    <property type="evidence" value="ECO:0007669"/>
    <property type="project" value="InterPro"/>
</dbReference>
<dbReference type="GO" id="GO:0031144">
    <property type="term" value="P:proteasome localization"/>
    <property type="evidence" value="ECO:0007669"/>
    <property type="project" value="InterPro"/>
</dbReference>
<dbReference type="GO" id="GO:0015031">
    <property type="term" value="P:protein transport"/>
    <property type="evidence" value="ECO:0007669"/>
    <property type="project" value="UniProtKB-KW"/>
</dbReference>
<dbReference type="FunFam" id="1.20.58.1590:FF:000001">
    <property type="entry name" value="Tethering factor for nuclear proteasome STS1"/>
    <property type="match status" value="1"/>
</dbReference>
<dbReference type="Gene3D" id="1.20.58.1590">
    <property type="entry name" value="Tethering factor for nuclear proteasome Cut8/Sts1"/>
    <property type="match status" value="1"/>
</dbReference>
<dbReference type="InterPro" id="IPR013868">
    <property type="entry name" value="Cut8/Sts1_fam"/>
</dbReference>
<dbReference type="InterPro" id="IPR038422">
    <property type="entry name" value="Cut8/Sts1_sf"/>
</dbReference>
<dbReference type="PANTHER" id="PTHR28032">
    <property type="entry name" value="FI02826P"/>
    <property type="match status" value="1"/>
</dbReference>
<dbReference type="PANTHER" id="PTHR28032:SF1">
    <property type="entry name" value="FI02826P"/>
    <property type="match status" value="1"/>
</dbReference>
<dbReference type="Pfam" id="PF08559">
    <property type="entry name" value="Cut8"/>
    <property type="match status" value="1"/>
</dbReference>
<sequence>MNSLVATPPVPPHFYENSRFSPSRMMSTPSSSYSSRKRKADDDNDHDGRMSASPTNSPAFTPRQLPHSYRNIKRSRPNVSGRPLSLPRLLETLDTDALRTVVRTMCERHPQLADEVVHTSPRPNVSSTLQVLRNYQAALQSSFPLGGNTESDYAYNRVRQPLTNLLDALSDFTPNFLPPNESQASTSLSYLDGATDIIHALPRWSTPQNNIERDSAYDEMCKAWILVIREAAKRGGGIQLQYGGWDQKLAKHNQTSGGKLQGAVNELGFSLGWMNGPDTPSHGANSEMGSIRDQLFSGTYGLGTPVKVGPW</sequence>
<proteinExistence type="inferred from homology"/>
<name>STS1_PENRW</name>